<comment type="similarity">
    <text evidence="1">Belongs to the bacterial ribosomal protein bL35 family.</text>
</comment>
<name>RL35_ECOSE</name>
<gene>
    <name evidence="1" type="primary">rpmI</name>
    <name type="ordered locus">ECSE_1885</name>
</gene>
<proteinExistence type="inferred from homology"/>
<reference key="1">
    <citation type="journal article" date="2008" name="DNA Res.">
        <title>Complete genome sequence and comparative analysis of the wild-type commensal Escherichia coli strain SE11 isolated from a healthy adult.</title>
        <authorList>
            <person name="Oshima K."/>
            <person name="Toh H."/>
            <person name="Ogura Y."/>
            <person name="Sasamoto H."/>
            <person name="Morita H."/>
            <person name="Park S.-H."/>
            <person name="Ooka T."/>
            <person name="Iyoda S."/>
            <person name="Taylor T.D."/>
            <person name="Hayashi T."/>
            <person name="Itoh K."/>
            <person name="Hattori M."/>
        </authorList>
    </citation>
    <scope>NUCLEOTIDE SEQUENCE [LARGE SCALE GENOMIC DNA]</scope>
    <source>
        <strain>SE11</strain>
    </source>
</reference>
<protein>
    <recommendedName>
        <fullName evidence="1">Large ribosomal subunit protein bL35</fullName>
    </recommendedName>
    <alternativeName>
        <fullName evidence="3">50S ribosomal protein L35</fullName>
    </alternativeName>
</protein>
<evidence type="ECO:0000255" key="1">
    <source>
        <dbReference type="HAMAP-Rule" id="MF_00514"/>
    </source>
</evidence>
<evidence type="ECO:0000256" key="2">
    <source>
        <dbReference type="SAM" id="MobiDB-lite"/>
    </source>
</evidence>
<evidence type="ECO:0000305" key="3"/>
<feature type="chain" id="PRO_1000127349" description="Large ribosomal subunit protein bL35">
    <location>
        <begin position="1"/>
        <end position="65"/>
    </location>
</feature>
<feature type="region of interest" description="Disordered" evidence="2">
    <location>
        <begin position="1"/>
        <end position="22"/>
    </location>
</feature>
<feature type="compositionally biased region" description="Basic residues" evidence="2">
    <location>
        <begin position="10"/>
        <end position="22"/>
    </location>
</feature>
<sequence length="65" mass="7289">MPKIKTVRGAAKRFKKTGKGGFKHKHANLRHILTKKATKRKRHLRPKAMVSKGDLGLVIACLPYA</sequence>
<organism>
    <name type="scientific">Escherichia coli (strain SE11)</name>
    <dbReference type="NCBI Taxonomy" id="409438"/>
    <lineage>
        <taxon>Bacteria</taxon>
        <taxon>Pseudomonadati</taxon>
        <taxon>Pseudomonadota</taxon>
        <taxon>Gammaproteobacteria</taxon>
        <taxon>Enterobacterales</taxon>
        <taxon>Enterobacteriaceae</taxon>
        <taxon>Escherichia</taxon>
    </lineage>
</organism>
<accession>B6IBD5</accession>
<keyword id="KW-0687">Ribonucleoprotein</keyword>
<keyword id="KW-0689">Ribosomal protein</keyword>
<dbReference type="EMBL" id="AP009240">
    <property type="protein sequence ID" value="BAG77409.1"/>
    <property type="molecule type" value="Genomic_DNA"/>
</dbReference>
<dbReference type="RefSeq" id="WP_001124225.1">
    <property type="nucleotide sequence ID" value="NC_011415.1"/>
</dbReference>
<dbReference type="SMR" id="B6IBD5"/>
<dbReference type="GeneID" id="97601348"/>
<dbReference type="KEGG" id="ecy:ECSE_1885"/>
<dbReference type="HOGENOM" id="CLU_169643_1_1_6"/>
<dbReference type="Proteomes" id="UP000008199">
    <property type="component" value="Chromosome"/>
</dbReference>
<dbReference type="GO" id="GO:0022625">
    <property type="term" value="C:cytosolic large ribosomal subunit"/>
    <property type="evidence" value="ECO:0007669"/>
    <property type="project" value="TreeGrafter"/>
</dbReference>
<dbReference type="GO" id="GO:0003735">
    <property type="term" value="F:structural constituent of ribosome"/>
    <property type="evidence" value="ECO:0007669"/>
    <property type="project" value="InterPro"/>
</dbReference>
<dbReference type="GO" id="GO:0006412">
    <property type="term" value="P:translation"/>
    <property type="evidence" value="ECO:0007669"/>
    <property type="project" value="UniProtKB-UniRule"/>
</dbReference>
<dbReference type="FunFam" id="4.10.410.60:FF:000001">
    <property type="entry name" value="50S ribosomal protein L35"/>
    <property type="match status" value="1"/>
</dbReference>
<dbReference type="Gene3D" id="4.10.410.60">
    <property type="match status" value="1"/>
</dbReference>
<dbReference type="HAMAP" id="MF_00514">
    <property type="entry name" value="Ribosomal_bL35"/>
    <property type="match status" value="1"/>
</dbReference>
<dbReference type="InterPro" id="IPR001706">
    <property type="entry name" value="Ribosomal_bL35"/>
</dbReference>
<dbReference type="InterPro" id="IPR021137">
    <property type="entry name" value="Ribosomal_bL35-like"/>
</dbReference>
<dbReference type="InterPro" id="IPR018265">
    <property type="entry name" value="Ribosomal_bL35_CS"/>
</dbReference>
<dbReference type="InterPro" id="IPR037229">
    <property type="entry name" value="Ribosomal_bL35_sf"/>
</dbReference>
<dbReference type="NCBIfam" id="TIGR00001">
    <property type="entry name" value="rpmI_bact"/>
    <property type="match status" value="1"/>
</dbReference>
<dbReference type="PANTHER" id="PTHR33343">
    <property type="entry name" value="54S RIBOSOMAL PROTEIN BL35M"/>
    <property type="match status" value="1"/>
</dbReference>
<dbReference type="PANTHER" id="PTHR33343:SF1">
    <property type="entry name" value="LARGE RIBOSOMAL SUBUNIT PROTEIN BL35M"/>
    <property type="match status" value="1"/>
</dbReference>
<dbReference type="Pfam" id="PF01632">
    <property type="entry name" value="Ribosomal_L35p"/>
    <property type="match status" value="1"/>
</dbReference>
<dbReference type="PRINTS" id="PR00064">
    <property type="entry name" value="RIBOSOMALL35"/>
</dbReference>
<dbReference type="SUPFAM" id="SSF143034">
    <property type="entry name" value="L35p-like"/>
    <property type="match status" value="1"/>
</dbReference>
<dbReference type="PROSITE" id="PS00936">
    <property type="entry name" value="RIBOSOMAL_L35"/>
    <property type="match status" value="1"/>
</dbReference>